<organism>
    <name type="scientific">Drosophila erecta</name>
    <name type="common">Fruit fly</name>
    <dbReference type="NCBI Taxonomy" id="7220"/>
    <lineage>
        <taxon>Eukaryota</taxon>
        <taxon>Metazoa</taxon>
        <taxon>Ecdysozoa</taxon>
        <taxon>Arthropoda</taxon>
        <taxon>Hexapoda</taxon>
        <taxon>Insecta</taxon>
        <taxon>Pterygota</taxon>
        <taxon>Neoptera</taxon>
        <taxon>Endopterygota</taxon>
        <taxon>Diptera</taxon>
        <taxon>Brachycera</taxon>
        <taxon>Muscomorpha</taxon>
        <taxon>Ephydroidea</taxon>
        <taxon>Drosophilidae</taxon>
        <taxon>Drosophila</taxon>
        <taxon>Sophophora</taxon>
    </lineage>
</organism>
<dbReference type="EMBL" id="CH954181">
    <property type="protein sequence ID" value="EDV48916.1"/>
    <property type="molecule type" value="Genomic_DNA"/>
</dbReference>
<dbReference type="SMR" id="B3P3M8"/>
<dbReference type="EnsemblMetazoa" id="FBtr0141175">
    <property type="protein sequence ID" value="FBpp0139667"/>
    <property type="gene ID" value="FBgn0113304"/>
</dbReference>
<dbReference type="EnsemblMetazoa" id="XM_001979922.3">
    <property type="protein sequence ID" value="XP_001979958.1"/>
    <property type="gene ID" value="LOC6552773"/>
</dbReference>
<dbReference type="GeneID" id="6552773"/>
<dbReference type="KEGG" id="der:6552773"/>
<dbReference type="CTD" id="41783"/>
<dbReference type="eggNOG" id="KOG0940">
    <property type="taxonomic scope" value="Eukaryota"/>
</dbReference>
<dbReference type="eggNOG" id="KOG3209">
    <property type="taxonomic scope" value="Eukaryota"/>
</dbReference>
<dbReference type="HOGENOM" id="CLU_005420_1_0_1"/>
<dbReference type="OMA" id="QVTVVSM"/>
<dbReference type="OrthoDB" id="2020426at2759"/>
<dbReference type="PhylomeDB" id="B3P3M8"/>
<dbReference type="ChiTaRS" id="kibra">
    <property type="organism name" value="fly"/>
</dbReference>
<dbReference type="Proteomes" id="UP000008711">
    <property type="component" value="Unassembled WGS sequence"/>
</dbReference>
<dbReference type="GO" id="GO:0106037">
    <property type="term" value="C:apicomedial cortex"/>
    <property type="evidence" value="ECO:0007669"/>
    <property type="project" value="EnsemblMetazoa"/>
</dbReference>
<dbReference type="GO" id="GO:0005911">
    <property type="term" value="C:cell-cell junction"/>
    <property type="evidence" value="ECO:0007669"/>
    <property type="project" value="EnsemblMetazoa"/>
</dbReference>
<dbReference type="GO" id="GO:0098592">
    <property type="term" value="C:cytoplasmic side of apical plasma membrane"/>
    <property type="evidence" value="ECO:0007669"/>
    <property type="project" value="EnsemblMetazoa"/>
</dbReference>
<dbReference type="GO" id="GO:0036375">
    <property type="term" value="C:Kibra-Ex-Mer complex"/>
    <property type="evidence" value="ECO:0007669"/>
    <property type="project" value="EnsemblMetazoa"/>
</dbReference>
<dbReference type="GO" id="GO:0019900">
    <property type="term" value="F:kinase binding"/>
    <property type="evidence" value="ECO:0007669"/>
    <property type="project" value="TreeGrafter"/>
</dbReference>
<dbReference type="GO" id="GO:0060090">
    <property type="term" value="F:molecular adaptor activity"/>
    <property type="evidence" value="ECO:0007669"/>
    <property type="project" value="TreeGrafter"/>
</dbReference>
<dbReference type="GO" id="GO:0007298">
    <property type="term" value="P:border follicle cell migration"/>
    <property type="evidence" value="ECO:0007669"/>
    <property type="project" value="EnsemblMetazoa"/>
</dbReference>
<dbReference type="GO" id="GO:0060253">
    <property type="term" value="P:negative regulation of glial cell proliferation"/>
    <property type="evidence" value="ECO:0007669"/>
    <property type="project" value="EnsemblMetazoa"/>
</dbReference>
<dbReference type="GO" id="GO:0046621">
    <property type="term" value="P:negative regulation of organ growth"/>
    <property type="evidence" value="ECO:0007669"/>
    <property type="project" value="EnsemblMetazoa"/>
</dbReference>
<dbReference type="GO" id="GO:0043065">
    <property type="term" value="P:positive regulation of apoptotic process"/>
    <property type="evidence" value="ECO:0007669"/>
    <property type="project" value="EnsemblMetazoa"/>
</dbReference>
<dbReference type="GO" id="GO:0035332">
    <property type="term" value="P:positive regulation of hippo signaling"/>
    <property type="evidence" value="ECO:0000250"/>
    <property type="project" value="UniProtKB"/>
</dbReference>
<dbReference type="GO" id="GO:0045463">
    <property type="term" value="P:R8 cell development"/>
    <property type="evidence" value="ECO:0007669"/>
    <property type="project" value="EnsemblMetazoa"/>
</dbReference>
<dbReference type="GO" id="GO:0045464">
    <property type="term" value="P:R8 cell fate specification"/>
    <property type="evidence" value="ECO:0007669"/>
    <property type="project" value="EnsemblMetazoa"/>
</dbReference>
<dbReference type="GO" id="GO:0006355">
    <property type="term" value="P:regulation of DNA-templated transcription"/>
    <property type="evidence" value="ECO:0007669"/>
    <property type="project" value="EnsemblMetazoa"/>
</dbReference>
<dbReference type="CDD" id="cd00201">
    <property type="entry name" value="WW"/>
    <property type="match status" value="2"/>
</dbReference>
<dbReference type="FunFam" id="2.60.40.150:FF:000228">
    <property type="entry name" value="Blast:Protein kibra"/>
    <property type="match status" value="1"/>
</dbReference>
<dbReference type="Gene3D" id="2.20.70.10">
    <property type="match status" value="2"/>
</dbReference>
<dbReference type="Gene3D" id="2.60.40.150">
    <property type="entry name" value="C2 domain"/>
    <property type="match status" value="1"/>
</dbReference>
<dbReference type="InterPro" id="IPR000008">
    <property type="entry name" value="C2_dom"/>
</dbReference>
<dbReference type="InterPro" id="IPR035892">
    <property type="entry name" value="C2_domain_sf"/>
</dbReference>
<dbReference type="InterPro" id="IPR001202">
    <property type="entry name" value="WW_dom"/>
</dbReference>
<dbReference type="InterPro" id="IPR036020">
    <property type="entry name" value="WW_dom_sf"/>
</dbReference>
<dbReference type="InterPro" id="IPR051105">
    <property type="entry name" value="WWC/KIBRA_Hippo_Reg"/>
</dbReference>
<dbReference type="PANTHER" id="PTHR14791">
    <property type="entry name" value="BOMB/KIRA PROTEINS"/>
    <property type="match status" value="1"/>
</dbReference>
<dbReference type="PANTHER" id="PTHR14791:SF29">
    <property type="entry name" value="PROTEIN KIBRA"/>
    <property type="match status" value="1"/>
</dbReference>
<dbReference type="Pfam" id="PF00168">
    <property type="entry name" value="C2"/>
    <property type="match status" value="1"/>
</dbReference>
<dbReference type="Pfam" id="PF00397">
    <property type="entry name" value="WW"/>
    <property type="match status" value="2"/>
</dbReference>
<dbReference type="SMART" id="SM00239">
    <property type="entry name" value="C2"/>
    <property type="match status" value="1"/>
</dbReference>
<dbReference type="SMART" id="SM00456">
    <property type="entry name" value="WW"/>
    <property type="match status" value="2"/>
</dbReference>
<dbReference type="SUPFAM" id="SSF49562">
    <property type="entry name" value="C2 domain (Calcium/lipid-binding domain, CaLB)"/>
    <property type="match status" value="1"/>
</dbReference>
<dbReference type="SUPFAM" id="SSF51045">
    <property type="entry name" value="WW domain"/>
    <property type="match status" value="2"/>
</dbReference>
<dbReference type="PROSITE" id="PS50004">
    <property type="entry name" value="C2"/>
    <property type="match status" value="1"/>
</dbReference>
<dbReference type="PROSITE" id="PS01159">
    <property type="entry name" value="WW_DOMAIN_1"/>
    <property type="match status" value="1"/>
</dbReference>
<dbReference type="PROSITE" id="PS50020">
    <property type="entry name" value="WW_DOMAIN_2"/>
    <property type="match status" value="2"/>
</dbReference>
<name>KIBRA_DROER</name>
<proteinExistence type="inferred from homology"/>
<comment type="function">
    <text evidence="1">Regulator of the Hippo/SWH (Sav/Wts/Hpo) signaling pathway, a signaling pathway that plays a pivotal role in organ size control and tumor suppression by restricting proliferation and promoting apoptosis. The core of this pathway is composed of a kinase cascade wherein Hippo (Hpo), in complex with its regulatory protein Salvador (Sav), phosphorylates and activates Warts (Wts) in complex with its regulatory protein Mats, which in turn phosphorylates and inactivates the Yorkie (Yki) oncoprotein. Kibra acts synergistically along with Ex and Mer to regulate the Hippo signaling pathway (By similarity).</text>
</comment>
<comment type="subunit">
    <text evidence="1">Forms a complex with Mer and Ex. Interacts (via domain WW 1) with Ex (via RXPPXY motif). Interacts with Mer, Sav, Hpo and Wts (By similarity).</text>
</comment>
<comment type="subcellular location">
    <subcellularLocation>
        <location evidence="1">Cytoplasm</location>
    </subcellularLocation>
    <subcellularLocation>
        <location evidence="1">Apical cell membrane</location>
    </subcellularLocation>
    <text evidence="1">Localizes at the apical cortex of epithelial cells and cytoplasmic, punctate.</text>
</comment>
<comment type="similarity">
    <text evidence="6">Belongs to the WWC family. KIBRA subfamily.</text>
</comment>
<gene>
    <name type="primary">Kibra</name>
    <name type="ORF">GG21121</name>
</gene>
<keyword id="KW-1003">Cell membrane</keyword>
<keyword id="KW-0175">Coiled coil</keyword>
<keyword id="KW-0963">Cytoplasm</keyword>
<keyword id="KW-0472">Membrane</keyword>
<keyword id="KW-0597">Phosphoprotein</keyword>
<keyword id="KW-0677">Repeat</keyword>
<keyword id="KW-0804">Transcription</keyword>
<keyword id="KW-0805">Transcription regulation</keyword>
<protein>
    <recommendedName>
        <fullName>Protein kibra</fullName>
    </recommendedName>
</protein>
<feature type="chain" id="PRO_0000392970" description="Protein kibra">
    <location>
        <begin position="1"/>
        <end position="1283"/>
    </location>
</feature>
<feature type="domain" description="WW 1" evidence="4">
    <location>
        <begin position="53"/>
        <end position="86"/>
    </location>
</feature>
<feature type="domain" description="WW 2" evidence="4">
    <location>
        <begin position="100"/>
        <end position="133"/>
    </location>
</feature>
<feature type="domain" description="C2" evidence="3">
    <location>
        <begin position="690"/>
        <end position="810"/>
    </location>
</feature>
<feature type="region of interest" description="Disordered" evidence="5">
    <location>
        <begin position="1"/>
        <end position="59"/>
    </location>
</feature>
<feature type="region of interest" description="Disordered" evidence="5">
    <location>
        <begin position="537"/>
        <end position="559"/>
    </location>
</feature>
<feature type="region of interest" description="Disordered" evidence="5">
    <location>
        <begin position="840"/>
        <end position="871"/>
    </location>
</feature>
<feature type="region of interest" description="Disordered" evidence="5">
    <location>
        <begin position="887"/>
        <end position="910"/>
    </location>
</feature>
<feature type="region of interest" description="Disordered" evidence="5">
    <location>
        <begin position="941"/>
        <end position="969"/>
    </location>
</feature>
<feature type="region of interest" description="Disordered" evidence="5">
    <location>
        <begin position="1197"/>
        <end position="1263"/>
    </location>
</feature>
<feature type="coiled-coil region" evidence="2">
    <location>
        <begin position="200"/>
        <end position="228"/>
    </location>
</feature>
<feature type="coiled-coil region" evidence="2">
    <location>
        <begin position="334"/>
        <end position="462"/>
    </location>
</feature>
<feature type="coiled-coil region" evidence="2">
    <location>
        <begin position="1048"/>
        <end position="1075"/>
    </location>
</feature>
<feature type="compositionally biased region" description="Polar residues" evidence="5">
    <location>
        <begin position="1"/>
        <end position="13"/>
    </location>
</feature>
<feature type="compositionally biased region" description="Basic residues" evidence="5">
    <location>
        <begin position="20"/>
        <end position="29"/>
    </location>
</feature>
<feature type="compositionally biased region" description="Low complexity" evidence="5">
    <location>
        <begin position="30"/>
        <end position="48"/>
    </location>
</feature>
<feature type="compositionally biased region" description="Polar residues" evidence="5">
    <location>
        <begin position="537"/>
        <end position="549"/>
    </location>
</feature>
<feature type="compositionally biased region" description="Low complexity" evidence="5">
    <location>
        <begin position="856"/>
        <end position="868"/>
    </location>
</feature>
<feature type="compositionally biased region" description="Acidic residues" evidence="5">
    <location>
        <begin position="895"/>
        <end position="909"/>
    </location>
</feature>
<feature type="compositionally biased region" description="Basic and acidic residues" evidence="5">
    <location>
        <begin position="941"/>
        <end position="965"/>
    </location>
</feature>
<feature type="compositionally biased region" description="Low complexity" evidence="5">
    <location>
        <begin position="1217"/>
        <end position="1262"/>
    </location>
</feature>
<accession>B3P3M8</accession>
<evidence type="ECO:0000250" key="1"/>
<evidence type="ECO:0000255" key="2"/>
<evidence type="ECO:0000255" key="3">
    <source>
        <dbReference type="PROSITE-ProRule" id="PRU00041"/>
    </source>
</evidence>
<evidence type="ECO:0000255" key="4">
    <source>
        <dbReference type="PROSITE-ProRule" id="PRU00224"/>
    </source>
</evidence>
<evidence type="ECO:0000256" key="5">
    <source>
        <dbReference type="SAM" id="MobiDB-lite"/>
    </source>
</evidence>
<evidence type="ECO:0000305" key="6"/>
<reference key="1">
    <citation type="journal article" date="2007" name="Nature">
        <title>Evolution of genes and genomes on the Drosophila phylogeny.</title>
        <authorList>
            <consortium name="Drosophila 12 genomes consortium"/>
        </authorList>
    </citation>
    <scope>NUCLEOTIDE SEQUENCE [LARGE SCALE GENOMIC DNA]</scope>
    <source>
        <strain>Tucson 14021-0224.01</strain>
    </source>
</reference>
<sequence length="1283" mass="143670">MPNLQQTASQSQHHLYPPHLRPHHHHQQQQHHQQQQQQQHTHHQQQQQHHSDFPLPDGWDIAKDFDGKTYYIDHINKKTTWLDPRDCYTKPQTFEDCVGDELPMGWEESYDPNIGPYYINHLAQSTQLEDPRQEWKTVQEQMLSDYLSAAQDQLENKREMLDVKQQRLLWAQEEYNHLKLAASRSSLCSSSSSMSRHDPELLRADLMLARERVHQLKQELTHITNDISYTERGMNTLYSVGEKINARENGCYDIAEVQAIREEMLKVHKSLVSGEKVREELMRSLVQIKNELGRQQISEENSDLASPFDRVCVASQTDLCGSSGDNLNGGARFAEMAKTKLQYAEWRKHIKKLQQQLADHVERIEPGQLESDKDRILLIQEKEKLLNDLNSISLKSRSEEEKRVIHQTRHKLEEDLKEAYEANNTCVANRLRFHEEKQLLLDKLQEALKSTKLLEERLKSFSSESTFSISSGSSLGSLSTASSKSALSFTDIYIDPFAVDSPIDVVDLRRRSQRLFQQHQQQRLLPVHPVLQQQQSAEVTLSPRSSLSMETPPASPMKYNAGADQTPQALKEEPTYANALPAPPAYTAPPPVPISGVRARPYDLDSTVLDCMMLEAKLQKLNMGTPLNLAAAPLSPISEKPSLLDLPQEMLSRSSSTSNTRSVSAAVSNESVAGDSGVFEASRAHLPRKELAQVQIGLKYLKQEGVLVVSLERANNLLALWTASADNSQVYLRAALLPNSLTSIRTKALGDFQKPFFNDTFAVPITLDKLLTKSLQVTVVTMTGQKEEIIGTVQISMAEFNPEDSTLKWYNVLSSKFIPSFESLDIPSTSAAAAAAAVAASNAPSSGNNREESSDESTITSSQTSTLTRNQAPCMELQEQITAELLELGPLNEPECSDDDDEDEEEELDDKQLVSDVGLMNSSGMLDAYLQNMKQEFADKETNTDRAYLPEKSRGQSQLMDDRPVKRSQTFTPSAAVSKNRYNCRLNRSDSDSAMHCGVAPHTFQRGAAERRSLRFHTKAPKSVTKLHHTHIPRTSLDLELDLQAQHSKLYFLNDQIAKLQNLKEVLQKACENKDPLVAAWAIENEEFQRLVARADPAKCPEERQLQKLLMKTAKEIHKLRKTKVPKGCPDLVSFKEKITFFTRKGLSVPELPSEFTLPEANPIEEEEEEEDEDEFYNSPETAIAINTALVASSNRNKNLSEHPHRSTSGAVPKLPAPVATPAATPAATPAATPVATPAATPVVATAAQPEAKPAAAPIPVASNDAEQQRFDYVVDRNYGVEV</sequence>